<comment type="function">
    <text evidence="1">Involved in the modulation of the specificity of the ClpAP-mediated ATP-dependent protein degradation.</text>
</comment>
<comment type="subunit">
    <text evidence="1">Binds to the N-terminal domain of the chaperone ClpA.</text>
</comment>
<comment type="similarity">
    <text evidence="1">Belongs to the ClpS family.</text>
</comment>
<name>CLPS_SHEPA</name>
<reference key="1">
    <citation type="submission" date="2007-10" db="EMBL/GenBank/DDBJ databases">
        <title>Complete sequence of Shewanella pealeana ATCC 700345.</title>
        <authorList>
            <consortium name="US DOE Joint Genome Institute"/>
            <person name="Copeland A."/>
            <person name="Lucas S."/>
            <person name="Lapidus A."/>
            <person name="Barry K."/>
            <person name="Glavina del Rio T."/>
            <person name="Dalin E."/>
            <person name="Tice H."/>
            <person name="Pitluck S."/>
            <person name="Chertkov O."/>
            <person name="Brettin T."/>
            <person name="Bruce D."/>
            <person name="Detter J.C."/>
            <person name="Han C."/>
            <person name="Schmutz J."/>
            <person name="Larimer F."/>
            <person name="Land M."/>
            <person name="Hauser L."/>
            <person name="Kyrpides N."/>
            <person name="Kim E."/>
            <person name="Zhao J.-S.Z."/>
            <person name="Manno D."/>
            <person name="Hawari J."/>
            <person name="Richardson P."/>
        </authorList>
    </citation>
    <scope>NUCLEOTIDE SEQUENCE [LARGE SCALE GENOMIC DNA]</scope>
    <source>
        <strain>ATCC 700345 / ANG-SQ1</strain>
    </source>
</reference>
<keyword id="KW-1185">Reference proteome</keyword>
<sequence>MSRTENIEHVEESVESELKQPSMYKVILNNDDYTPMDFVIEILQLFFKKDEQQATEIMLAIHHKGKGICGIYPFGIAETKVAQVNQFARQNQHPLLCSLEEA</sequence>
<gene>
    <name evidence="1" type="primary">clpS</name>
    <name type="ordered locus">Spea_2533</name>
</gene>
<feature type="chain" id="PRO_1000079029" description="ATP-dependent Clp protease adapter protein ClpS">
    <location>
        <begin position="1"/>
        <end position="102"/>
    </location>
</feature>
<proteinExistence type="inferred from homology"/>
<protein>
    <recommendedName>
        <fullName evidence="1">ATP-dependent Clp protease adapter protein ClpS</fullName>
    </recommendedName>
</protein>
<dbReference type="EMBL" id="CP000851">
    <property type="protein sequence ID" value="ABV87853.1"/>
    <property type="molecule type" value="Genomic_DNA"/>
</dbReference>
<dbReference type="RefSeq" id="WP_012155760.1">
    <property type="nucleotide sequence ID" value="NC_009901.1"/>
</dbReference>
<dbReference type="SMR" id="A8H5L6"/>
<dbReference type="STRING" id="398579.Spea_2533"/>
<dbReference type="KEGG" id="spl:Spea_2533"/>
<dbReference type="eggNOG" id="COG2127">
    <property type="taxonomic scope" value="Bacteria"/>
</dbReference>
<dbReference type="HOGENOM" id="CLU_134358_2_1_6"/>
<dbReference type="OrthoDB" id="9796121at2"/>
<dbReference type="Proteomes" id="UP000002608">
    <property type="component" value="Chromosome"/>
</dbReference>
<dbReference type="GO" id="GO:0030163">
    <property type="term" value="P:protein catabolic process"/>
    <property type="evidence" value="ECO:0007669"/>
    <property type="project" value="InterPro"/>
</dbReference>
<dbReference type="GO" id="GO:0006508">
    <property type="term" value="P:proteolysis"/>
    <property type="evidence" value="ECO:0007669"/>
    <property type="project" value="UniProtKB-UniRule"/>
</dbReference>
<dbReference type="FunFam" id="3.30.1390.10:FF:000002">
    <property type="entry name" value="ATP-dependent Clp protease adapter protein ClpS"/>
    <property type="match status" value="1"/>
</dbReference>
<dbReference type="Gene3D" id="3.30.1390.10">
    <property type="match status" value="1"/>
</dbReference>
<dbReference type="HAMAP" id="MF_00302">
    <property type="entry name" value="ClpS"/>
    <property type="match status" value="1"/>
</dbReference>
<dbReference type="InterPro" id="IPR022935">
    <property type="entry name" value="ClpS"/>
</dbReference>
<dbReference type="InterPro" id="IPR003769">
    <property type="entry name" value="ClpS_core"/>
</dbReference>
<dbReference type="InterPro" id="IPR014719">
    <property type="entry name" value="Ribosomal_bL12_C/ClpS-like"/>
</dbReference>
<dbReference type="NCBIfam" id="NF000670">
    <property type="entry name" value="PRK00033.1-3"/>
    <property type="match status" value="1"/>
</dbReference>
<dbReference type="NCBIfam" id="NF000672">
    <property type="entry name" value="PRK00033.1-5"/>
    <property type="match status" value="1"/>
</dbReference>
<dbReference type="PANTHER" id="PTHR33473:SF19">
    <property type="entry name" value="ATP-DEPENDENT CLP PROTEASE ADAPTER PROTEIN CLPS"/>
    <property type="match status" value="1"/>
</dbReference>
<dbReference type="PANTHER" id="PTHR33473">
    <property type="entry name" value="ATP-DEPENDENT CLP PROTEASE ADAPTER PROTEIN CLPS1, CHLOROPLASTIC"/>
    <property type="match status" value="1"/>
</dbReference>
<dbReference type="Pfam" id="PF02617">
    <property type="entry name" value="ClpS"/>
    <property type="match status" value="1"/>
</dbReference>
<dbReference type="SUPFAM" id="SSF54736">
    <property type="entry name" value="ClpS-like"/>
    <property type="match status" value="1"/>
</dbReference>
<evidence type="ECO:0000255" key="1">
    <source>
        <dbReference type="HAMAP-Rule" id="MF_00302"/>
    </source>
</evidence>
<organism>
    <name type="scientific">Shewanella pealeana (strain ATCC 700345 / ANG-SQ1)</name>
    <dbReference type="NCBI Taxonomy" id="398579"/>
    <lineage>
        <taxon>Bacteria</taxon>
        <taxon>Pseudomonadati</taxon>
        <taxon>Pseudomonadota</taxon>
        <taxon>Gammaproteobacteria</taxon>
        <taxon>Alteromonadales</taxon>
        <taxon>Shewanellaceae</taxon>
        <taxon>Shewanella</taxon>
    </lineage>
</organism>
<accession>A8H5L6</accession>